<evidence type="ECO:0000255" key="1"/>
<evidence type="ECO:0000255" key="2">
    <source>
        <dbReference type="PROSITE-ProRule" id="PRU01091"/>
    </source>
</evidence>
<evidence type="ECO:0000305" key="3"/>
<evidence type="ECO:0007829" key="4">
    <source>
        <dbReference type="PDB" id="8B4B"/>
    </source>
</evidence>
<evidence type="ECO:0007829" key="5">
    <source>
        <dbReference type="PDB" id="8B4E"/>
    </source>
</evidence>
<reference key="1">
    <citation type="journal article" date="1987" name="Cell">
        <title>Cholera toxin transcriptional activator toxR is a transmembrane DNA binding protein.</title>
        <authorList>
            <person name="Miller V.L."/>
            <person name="Taylor R.K."/>
            <person name="Mekalanos J.J."/>
        </authorList>
    </citation>
    <scope>NUCLEOTIDE SEQUENCE [GENOMIC DNA]</scope>
    <source>
        <strain>ATCC 25870 / Classical Inaba 569B / Serotype O1</strain>
    </source>
</reference>
<reference key="2">
    <citation type="journal article" date="2000" name="Nature">
        <title>DNA sequence of both chromosomes of the cholera pathogen Vibrio cholerae.</title>
        <authorList>
            <person name="Heidelberg J.F."/>
            <person name="Eisen J.A."/>
            <person name="Nelson W.C."/>
            <person name="Clayton R.A."/>
            <person name="Gwinn M.L."/>
            <person name="Dodson R.J."/>
            <person name="Haft D.H."/>
            <person name="Hickey E.K."/>
            <person name="Peterson J.D."/>
            <person name="Umayam L.A."/>
            <person name="Gill S.R."/>
            <person name="Nelson K.E."/>
            <person name="Read T.D."/>
            <person name="Tettelin H."/>
            <person name="Richardson D.L."/>
            <person name="Ermolaeva M.D."/>
            <person name="Vamathevan J.J."/>
            <person name="Bass S."/>
            <person name="Qin H."/>
            <person name="Dragoi I."/>
            <person name="Sellers P."/>
            <person name="McDonald L.A."/>
            <person name="Utterback T.R."/>
            <person name="Fleischmann R.D."/>
            <person name="Nierman W.C."/>
            <person name="White O."/>
            <person name="Salzberg S.L."/>
            <person name="Smith H.O."/>
            <person name="Colwell R.R."/>
            <person name="Mekalanos J.J."/>
            <person name="Venter J.C."/>
            <person name="Fraser C.M."/>
        </authorList>
    </citation>
    <scope>NUCLEOTIDE SEQUENCE [LARGE SCALE GENOMIC DNA]</scope>
    <source>
        <strain>ATCC 39315 / El Tor Inaba N16961</strain>
    </source>
</reference>
<reference key="3">
    <citation type="journal article" date="1990" name="Proc. Natl. Acad. Sci. U.S.A.">
        <title>Expression of ToxR, the transcriptional activator of the virulence factors in Vibrio cholerae, is modulated by the heat shock response.</title>
        <authorList>
            <person name="Parsot C."/>
            <person name="Mekalanos J.J."/>
        </authorList>
    </citation>
    <scope>NUCLEOTIDE SEQUENCE [GENOMIC DNA] OF 1-11</scope>
    <source>
        <strain>ATCC 55056 / El Tor Ogawa E7946</strain>
    </source>
</reference>
<reference key="4">
    <citation type="journal article" date="1991" name="Cell">
        <title>Periplasmic interaction between two membrane regulatory proteins, ToxR and ToxS, results in signal transduction and transcriptional activation.</title>
        <authorList>
            <person name="DiRita V.J."/>
            <person name="Mekalanos J.J."/>
        </authorList>
    </citation>
    <scope>NUCLEOTIDE SEQUENCE [GENOMIC DNA] OF 263-294</scope>
</reference>
<reference key="5">
    <citation type="journal article" date="1992" name="J. Bacteriol.">
        <title>ToxR proteins with substitutions in residues conserved with OmpR fail to activate transcription from the cholera toxin promoter.</title>
        <authorList>
            <person name="Ottemann K.M."/>
            <person name="Dirita V.J."/>
            <person name="Mekalanos J.J."/>
        </authorList>
    </citation>
    <scope>MUTAGENESIS</scope>
</reference>
<accession>P15795</accession>
<accession>Q9KTB9</accession>
<proteinExistence type="evidence at protein level"/>
<organism>
    <name type="scientific">Vibrio cholerae serotype O1 (strain ATCC 39315 / El Tor Inaba N16961)</name>
    <dbReference type="NCBI Taxonomy" id="243277"/>
    <lineage>
        <taxon>Bacteria</taxon>
        <taxon>Pseudomonadati</taxon>
        <taxon>Pseudomonadota</taxon>
        <taxon>Gammaproteobacteria</taxon>
        <taxon>Vibrionales</taxon>
        <taxon>Vibrionaceae</taxon>
        <taxon>Vibrio</taxon>
    </lineage>
</organism>
<comment type="function">
    <text>This transcription activator controls cholera toxin, pilus colonization factor and outer membrane protein expression in V.cholerae. It binds to the 5'-TTTTGAT-3' tandemly repeated DNA sequence in the cholera toxin promoter region. ToxS interacts with the C-terminal periplasmic domain of ToxR, stimulating its activity. It activates transcription at the promoters for tcpI and tcpA and this is presumably via ToxT.</text>
</comment>
<comment type="subcellular location">
    <subcellularLocation>
        <location evidence="3">Cell membrane</location>
        <topology evidence="3">Single-pass membrane protein</topology>
    </subcellularLocation>
</comment>
<keyword id="KW-0002">3D-structure</keyword>
<keyword id="KW-0010">Activator</keyword>
<keyword id="KW-1003">Cell membrane</keyword>
<keyword id="KW-0238">DNA-binding</keyword>
<keyword id="KW-0472">Membrane</keyword>
<keyword id="KW-1185">Reference proteome</keyword>
<keyword id="KW-0804">Transcription</keyword>
<keyword id="KW-0805">Transcription regulation</keyword>
<keyword id="KW-0812">Transmembrane</keyword>
<keyword id="KW-1133">Transmembrane helix</keyword>
<keyword id="KW-0902">Two-component regulatory system</keyword>
<protein>
    <recommendedName>
        <fullName>Cholera toxin transcriptional activator</fullName>
    </recommendedName>
</protein>
<dbReference type="EMBL" id="M21249">
    <property type="protein sequence ID" value="AAA27549.1"/>
    <property type="molecule type" value="Genomic_DNA"/>
</dbReference>
<dbReference type="EMBL" id="AE003852">
    <property type="protein sequence ID" value="AAF94145.1"/>
    <property type="molecule type" value="Genomic_DNA"/>
</dbReference>
<dbReference type="EMBL" id="M58033">
    <property type="protein sequence ID" value="AAA27575.1"/>
    <property type="molecule type" value="Genomic_DNA"/>
</dbReference>
<dbReference type="EMBL" id="M62761">
    <property type="protein sequence ID" value="AAA63558.1"/>
    <property type="molecule type" value="Genomic_DNA"/>
</dbReference>
<dbReference type="PIR" id="A25970">
    <property type="entry name" value="A25970"/>
</dbReference>
<dbReference type="PIR" id="E82257">
    <property type="entry name" value="E82257"/>
</dbReference>
<dbReference type="RefSeq" id="NP_230630.1">
    <property type="nucleotide sequence ID" value="NC_002505.1"/>
</dbReference>
<dbReference type="PDB" id="7NMB">
    <property type="method" value="NMR"/>
    <property type="chains" value="A=1-133"/>
</dbReference>
<dbReference type="PDB" id="8B4B">
    <property type="method" value="X-ray"/>
    <property type="resolution" value="1.75 A"/>
    <property type="chains" value="W/X/Y/Z=19-127"/>
</dbReference>
<dbReference type="PDB" id="8B4C">
    <property type="method" value="X-ray"/>
    <property type="resolution" value="2.07 A"/>
    <property type="chains" value="D=19-126"/>
</dbReference>
<dbReference type="PDB" id="8B4D">
    <property type="method" value="X-ray"/>
    <property type="resolution" value="2.64 A"/>
    <property type="chains" value="B/C/D=19-126"/>
</dbReference>
<dbReference type="PDB" id="8B4E">
    <property type="method" value="X-ray"/>
    <property type="resolution" value="3.25 A"/>
    <property type="chains" value="A/B=19-126"/>
</dbReference>
<dbReference type="PDBsum" id="7NMB"/>
<dbReference type="PDBsum" id="8B4B"/>
<dbReference type="PDBsum" id="8B4C"/>
<dbReference type="PDBsum" id="8B4D"/>
<dbReference type="PDBsum" id="8B4E"/>
<dbReference type="SASBDB" id="P15795"/>
<dbReference type="SMR" id="P15795"/>
<dbReference type="STRING" id="243277.VC_0984"/>
<dbReference type="DNASU" id="2614237"/>
<dbReference type="EnsemblBacteria" id="AAF94145">
    <property type="protein sequence ID" value="AAF94145"/>
    <property type="gene ID" value="VC_0984"/>
</dbReference>
<dbReference type="KEGG" id="vch:VC_0984"/>
<dbReference type="PATRIC" id="fig|243277.26.peg.937"/>
<dbReference type="eggNOG" id="COG3710">
    <property type="taxonomic scope" value="Bacteria"/>
</dbReference>
<dbReference type="HOGENOM" id="CLU_085388_0_0_6"/>
<dbReference type="PHI-base" id="PHI:11032"/>
<dbReference type="PHI-base" id="PHI:6217"/>
<dbReference type="PHI-base" id="PHI:701"/>
<dbReference type="PHI-base" id="PHI:7777"/>
<dbReference type="Proteomes" id="UP000000584">
    <property type="component" value="Chromosome 1"/>
</dbReference>
<dbReference type="GO" id="GO:0005886">
    <property type="term" value="C:plasma membrane"/>
    <property type="evidence" value="ECO:0007669"/>
    <property type="project" value="UniProtKB-SubCell"/>
</dbReference>
<dbReference type="GO" id="GO:0003677">
    <property type="term" value="F:DNA binding"/>
    <property type="evidence" value="ECO:0007669"/>
    <property type="project" value="UniProtKB-KW"/>
</dbReference>
<dbReference type="GO" id="GO:0000156">
    <property type="term" value="F:phosphorelay response regulator activity"/>
    <property type="evidence" value="ECO:0000314"/>
    <property type="project" value="CACAO"/>
</dbReference>
<dbReference type="GO" id="GO:0006355">
    <property type="term" value="P:regulation of DNA-templated transcription"/>
    <property type="evidence" value="ECO:0000315"/>
    <property type="project" value="CACAO"/>
</dbReference>
<dbReference type="CDD" id="cd00383">
    <property type="entry name" value="trans_reg_C"/>
    <property type="match status" value="1"/>
</dbReference>
<dbReference type="FunFam" id="1.10.10.10:FF:000863">
    <property type="entry name" value="Cholera toxin transcriptional activator"/>
    <property type="match status" value="1"/>
</dbReference>
<dbReference type="Gene3D" id="1.10.10.10">
    <property type="entry name" value="Winged helix-like DNA-binding domain superfamily/Winged helix DNA-binding domain"/>
    <property type="match status" value="1"/>
</dbReference>
<dbReference type="InterPro" id="IPR001867">
    <property type="entry name" value="OmpR/PhoB-type_DNA-bd"/>
</dbReference>
<dbReference type="InterPro" id="IPR016032">
    <property type="entry name" value="Sig_transdc_resp-reg_C-effctor"/>
</dbReference>
<dbReference type="InterPro" id="IPR036388">
    <property type="entry name" value="WH-like_DNA-bd_sf"/>
</dbReference>
<dbReference type="Pfam" id="PF00486">
    <property type="entry name" value="Trans_reg_C"/>
    <property type="match status" value="1"/>
</dbReference>
<dbReference type="SMART" id="SM00862">
    <property type="entry name" value="Trans_reg_C"/>
    <property type="match status" value="1"/>
</dbReference>
<dbReference type="SUPFAM" id="SSF46894">
    <property type="entry name" value="C-terminal effector domain of the bipartite response regulators"/>
    <property type="match status" value="1"/>
</dbReference>
<dbReference type="PROSITE" id="PS51755">
    <property type="entry name" value="OMPR_PHOB"/>
    <property type="match status" value="1"/>
</dbReference>
<gene>
    <name type="primary">toxR</name>
    <name type="ordered locus">VC_0984</name>
</gene>
<sequence length="294" mass="32506">MFGLGHNSKEISMSHIGTKFILAEKFTFDPLSNTLIDKEDSEEIIRLGSNESRILWLLAQRPNEVISRNDLHDFVWREQGFEVDDSSLTQAISTLRKMLKDSTKSPQYVKTVPKRGYQLIARVETVEEEMARESEAAHDISQPESVNEYAESSSVPSSATVVNTPQPANVVTNKSAPNLGNRLLILIAVLLPLAVLLLTNPSQTSFKPLTVVDGVAVNMPNNHPDLSNWLPSIELCVKKYNEKHTGGLKPIEVIATGGQNNQLTLNYIHSPEVSGENITLRIVANPNDAIKVCE</sequence>
<feature type="chain" id="PRO_0000081346" description="Cholera toxin transcriptional activator">
    <location>
        <begin position="1"/>
        <end position="294"/>
    </location>
</feature>
<feature type="topological domain" description="Cytoplasmic" evidence="1">
    <location>
        <begin position="1"/>
        <end position="182"/>
    </location>
</feature>
<feature type="transmembrane region" description="Helical" evidence="1">
    <location>
        <begin position="183"/>
        <end position="198"/>
    </location>
</feature>
<feature type="topological domain" description="Periplasmic" evidence="1">
    <location>
        <begin position="199"/>
        <end position="294"/>
    </location>
</feature>
<feature type="DNA-binding region" description="OmpR/PhoB-type" evidence="2">
    <location>
        <begin position="18"/>
        <end position="121"/>
    </location>
</feature>
<feature type="sequence conflict" description="In Ref. 1; AAA27549." evidence="3" ref="1">
    <original>S</original>
    <variation>N</variation>
    <location>
        <position position="134"/>
    </location>
</feature>
<feature type="sequence conflict" description="In Ref. 1; AAA27549." evidence="3" ref="1">
    <original>T</original>
    <variation>A</variation>
    <location>
        <position position="172"/>
    </location>
</feature>
<feature type="sequence conflict" description="In Ref. 1; AAA27549." evidence="3" ref="1">
    <original>L</original>
    <variation>F</variation>
    <location>
        <position position="184"/>
    </location>
</feature>
<feature type="sequence conflict" description="In Ref. 1; AAA27549." evidence="3" ref="1">
    <original>T</original>
    <variation>S</variation>
    <location>
        <position position="204"/>
    </location>
</feature>
<feature type="strand" evidence="4">
    <location>
        <begin position="20"/>
        <end position="22"/>
    </location>
</feature>
<feature type="turn" evidence="4">
    <location>
        <begin position="23"/>
        <end position="25"/>
    </location>
</feature>
<feature type="strand" evidence="4">
    <location>
        <begin position="26"/>
        <end position="29"/>
    </location>
</feature>
<feature type="turn" evidence="4">
    <location>
        <begin position="30"/>
        <end position="33"/>
    </location>
</feature>
<feature type="strand" evidence="4">
    <location>
        <begin position="34"/>
        <end position="37"/>
    </location>
</feature>
<feature type="helix" evidence="4">
    <location>
        <begin position="38"/>
        <end position="40"/>
    </location>
</feature>
<feature type="strand" evidence="4">
    <location>
        <begin position="44"/>
        <end position="46"/>
    </location>
</feature>
<feature type="helix" evidence="4">
    <location>
        <begin position="49"/>
        <end position="60"/>
    </location>
</feature>
<feature type="strand" evidence="5">
    <location>
        <begin position="64"/>
        <end position="67"/>
    </location>
</feature>
<feature type="helix" evidence="4">
    <location>
        <begin position="68"/>
        <end position="75"/>
    </location>
</feature>
<feature type="helix" evidence="4">
    <location>
        <begin position="77"/>
        <end position="79"/>
    </location>
</feature>
<feature type="helix" evidence="4">
    <location>
        <begin position="86"/>
        <end position="98"/>
    </location>
</feature>
<feature type="strand" evidence="4">
    <location>
        <begin position="103"/>
        <end position="105"/>
    </location>
</feature>
<feature type="strand" evidence="4">
    <location>
        <begin position="107"/>
        <end position="112"/>
    </location>
</feature>
<feature type="turn" evidence="4">
    <location>
        <begin position="113"/>
        <end position="115"/>
    </location>
</feature>
<feature type="strand" evidence="4">
    <location>
        <begin position="116"/>
        <end position="119"/>
    </location>
</feature>
<feature type="strand" evidence="4">
    <location>
        <begin position="123"/>
        <end position="125"/>
    </location>
</feature>
<name>TOXR_VIBCH</name>